<reference evidence="12 13" key="1">
    <citation type="journal article" date="2008" name="Genetics">
        <title>Two adjacent nucleotide-binding site-leucine-rich repeat class genes are required to confer Pikm-specific rice blast resistance.</title>
        <authorList>
            <person name="Ashikawa I."/>
            <person name="Hayashi N."/>
            <person name="Yamane H."/>
            <person name="Kanamori H."/>
            <person name="Wu J."/>
            <person name="Matsumoto T."/>
            <person name="Ono K."/>
            <person name="Yano M."/>
        </authorList>
    </citation>
    <scope>NUCLEOTIDE SEQUENCE [GENOMIC DNA / MRNA]</scope>
    <scope>FUNCTION</scope>
    <scope>TISSUE SPECIFICITY</scope>
    <scope>INDUCTION BY PATHOGEN INFECTION</scope>
    <source>
        <strain>cv. Tsuyuake</strain>
    </source>
</reference>
<reference evidence="6 7 8 9 10" key="2">
    <citation type="journal article" date="2010" name="Plant Sci.">
        <title>Sequence variation at the rice blast resistance gene Pi-km locus: Implications for the development of allele specific markers.</title>
        <authorList>
            <person name="Costanzo S."/>
            <person name="Jia Y."/>
        </authorList>
    </citation>
    <scope>NUCLEOTIDE SEQUENCE [GENOMIC DNA]</scope>
    <source>
        <strain>cv. Cypress</strain>
        <strain>cv. Kanto 51</strain>
        <strain>cv. Katy</strain>
        <strain>cv. Lemont</strain>
    </source>
</reference>
<reference evidence="11" key="3">
    <citation type="submission" date="2015-12" db="EMBL/GenBank/DDBJ databases">
        <authorList>
            <person name="Shamseldin A."/>
            <person name="Moawad H."/>
            <person name="Abd El-Rahim W.M."/>
            <person name="Sadowsky M.J."/>
        </authorList>
    </citation>
    <scope>NUCLEOTIDE SEQUENCE [GENOMIC DNA]</scope>
    <source>
        <strain>cv. LTH</strain>
    </source>
</reference>
<evidence type="ECO:0000250" key="1">
    <source>
        <dbReference type="UniProtKB" id="P0DO07"/>
    </source>
</evidence>
<evidence type="ECO:0000255" key="2"/>
<evidence type="ECO:0000256" key="3">
    <source>
        <dbReference type="SAM" id="MobiDB-lite"/>
    </source>
</evidence>
<evidence type="ECO:0000269" key="4">
    <source>
    </source>
</evidence>
<evidence type="ECO:0000305" key="5"/>
<evidence type="ECO:0000312" key="6">
    <source>
        <dbReference type="EMBL" id="ADE80956.1"/>
    </source>
</evidence>
<evidence type="ECO:0000312" key="7">
    <source>
        <dbReference type="EMBL" id="ADE80958.1"/>
    </source>
</evidence>
<evidence type="ECO:0000312" key="8">
    <source>
        <dbReference type="EMBL" id="ADE80959.1"/>
    </source>
</evidence>
<evidence type="ECO:0000312" key="9">
    <source>
        <dbReference type="EMBL" id="ADE80961.1"/>
    </source>
</evidence>
<evidence type="ECO:0000312" key="10">
    <source>
        <dbReference type="EMBL" id="ADE80962.1"/>
    </source>
</evidence>
<evidence type="ECO:0000312" key="11">
    <source>
        <dbReference type="EMBL" id="ANO81542.1"/>
    </source>
</evidence>
<evidence type="ECO:0000312" key="12">
    <source>
        <dbReference type="EMBL" id="BAG71908.1"/>
    </source>
</evidence>
<evidence type="ECO:0000312" key="13">
    <source>
        <dbReference type="EMBL" id="BAG72136.1"/>
    </source>
</evidence>
<keyword id="KW-0067">ATP-binding</keyword>
<keyword id="KW-0175">Coiled coil</keyword>
<keyword id="KW-0433">Leucine-rich repeat</keyword>
<keyword id="KW-0547">Nucleotide-binding</keyword>
<keyword id="KW-0611">Plant defense</keyword>
<keyword id="KW-0677">Repeat</keyword>
<feature type="chain" id="PRO_0000444668" description="Disease resistance protein Pikm2-TS">
    <location>
        <begin position="1"/>
        <end position="1021"/>
    </location>
</feature>
<feature type="domain" description="NB-ARC" evidence="2">
    <location>
        <begin position="186"/>
        <end position="519"/>
    </location>
</feature>
<feature type="repeat" description="LRR 1" evidence="2">
    <location>
        <begin position="612"/>
        <end position="634"/>
    </location>
</feature>
<feature type="repeat" description="LRR 2" evidence="2">
    <location>
        <begin position="659"/>
        <end position="682"/>
    </location>
</feature>
<feature type="repeat" description="LRR 3" evidence="2">
    <location>
        <begin position="683"/>
        <end position="705"/>
    </location>
</feature>
<feature type="repeat" description="LRR 4" evidence="2">
    <location>
        <begin position="785"/>
        <end position="807"/>
    </location>
</feature>
<feature type="repeat" description="LRR 5" evidence="2">
    <location>
        <begin position="817"/>
        <end position="841"/>
    </location>
</feature>
<feature type="repeat" description="LRR 6" evidence="2">
    <location>
        <begin position="843"/>
        <end position="865"/>
    </location>
</feature>
<feature type="repeat" description="LRR 7" evidence="2">
    <location>
        <begin position="866"/>
        <end position="888"/>
    </location>
</feature>
<feature type="repeat" description="LRR 8" evidence="2">
    <location>
        <begin position="912"/>
        <end position="935"/>
    </location>
</feature>
<feature type="repeat" description="LRR 9" evidence="2">
    <location>
        <begin position="957"/>
        <end position="981"/>
    </location>
</feature>
<feature type="region of interest" description="Structured coiled coil (CC) domain" evidence="1">
    <location>
        <begin position="1"/>
        <end position="182"/>
    </location>
</feature>
<feature type="region of interest" description="Disordered" evidence="3">
    <location>
        <begin position="297"/>
        <end position="317"/>
    </location>
</feature>
<feature type="region of interest" description="Disordered" evidence="3">
    <location>
        <begin position="719"/>
        <end position="751"/>
    </location>
</feature>
<accession>P0DO08</accession>
<accession>B5UBC0</accession>
<name>PIKM2_ORYSJ</name>
<proteinExistence type="evidence at transcript level"/>
<sequence>MELVVGASEATMKSLLGKLGNLLAQEYALISGIRGDIQYINDELASMQAFLRDLSNVPEGHSHGHRMKDWMKQIRDIAYDVEDCIDDFAHRLPQDSISDAKWSFLLTKIYELWTWWPRRVIASNIAQLKVRAQQIADRRSRYGVNNPEHLDSSSSARTRAVNYEIAEYQVTSPQIIGIKEPVGMKTVMEELEVWLTNPQAENGQAVLSIVGFGGVGKTTIATALYRKVSEKFQCRASVAVSQNYDQGKVLNSILSQVSNQEQGSSTTISEKKNLTSGAKSMLKTALSLLRGNCICQPENDGNPDNTPIRLQETTDDDQNPRKLEQLLAEKSYILLIDDIWSAETWESIRSILPKNNKGGRIIVTTRFQAVGSTCSPLETDRLHTVDFLTDDESQNLFNTSICESKIRKDSNKVDEQVPEEIWKICGGLPLAIVSMAGLVACNPRKACCDWSKLCKSLFPEQETPLTLDGVTRILDCCYNDLPADLKTCLLYLSIFPKGWKISRKRLSRRWIAEGFANEKQGLTQERVAEAYFNQLTRRNLVRPMEHGSNGKVKTFQVHDMVLEYIMSKSIEENFITVVGGHWQMTAPSNKVRRLSMQSSGSNRGSSTKGLNLAQVRSLTVFGNLNHVPFHSFNYGIIQVLDLEDWKGLKERHMTEICQMLLLKYLSIRRTEISKIPSKIQKLEYLETLDIRETYVRDLPKSIVQLKRIISILGGNKNTRKGLRLPQEKSKKPIKNPSPQGKTKEPAKKGFLSQEKGKGAMKALRVLSGIEIVEESSEVAAGLHQLTGLRKLAIYKLNITKGGDTFKQLQSSIEYLGSCGLQTLAINDENSEFINSLGDMPAPPRYLVALELSGKLEKLPKWITSITTLNKLTISVTVLRTETLEILHILPSLFSLTFAFSLSAAKQDQDIIKDILENNKLDSDGEIVIPAEGFKSLKLLRFFAPLVPKLSFLDKNAMPALEIIEMRFKDFEGLFGIEILENLREVHLKVSDGAEAITKFLVNDLKVNTEKPKVFVDGIVTA</sequence>
<protein>
    <recommendedName>
        <fullName evidence="5">Disease resistance protein Pikm2-TS</fullName>
    </recommendedName>
</protein>
<organism>
    <name type="scientific">Oryza sativa subsp. japonica</name>
    <name type="common">Rice</name>
    <dbReference type="NCBI Taxonomy" id="39947"/>
    <lineage>
        <taxon>Eukaryota</taxon>
        <taxon>Viridiplantae</taxon>
        <taxon>Streptophyta</taxon>
        <taxon>Embryophyta</taxon>
        <taxon>Tracheophyta</taxon>
        <taxon>Spermatophyta</taxon>
        <taxon>Magnoliopsida</taxon>
        <taxon>Liliopsida</taxon>
        <taxon>Poales</taxon>
        <taxon>Poaceae</taxon>
        <taxon>BOP clade</taxon>
        <taxon>Oryzoideae</taxon>
        <taxon>Oryzeae</taxon>
        <taxon>Oryzinae</taxon>
        <taxon>Oryza</taxon>
        <taxon>Oryza sativa</taxon>
    </lineage>
</organism>
<comment type="function">
    <text evidence="4">Disease resistance (R) protein. Resistance proteins guard the plant against pathogens that contain an appropriate avirulence protein via an indirect interaction with this avirulence protein. That triggers a defense system including the hypersensitive response, which restricts the pathogen growth. Contribution of Pikm-1 is required to recognize the effector avirulence protein AVR-Pik.</text>
</comment>
<comment type="tissue specificity">
    <text evidence="4">Constitutively expressed.</text>
</comment>
<comment type="induction">
    <text evidence="4">By M.oryzae pathogen infection.</text>
</comment>
<comment type="similarity">
    <text evidence="5">Belongs to the disease resistance NB-LRR family.</text>
</comment>
<dbReference type="EMBL" id="AB462256">
    <property type="protein sequence ID" value="BAG71908.1"/>
    <property type="molecule type" value="Genomic_DNA"/>
</dbReference>
<dbReference type="EMBL" id="AB462325">
    <property type="protein sequence ID" value="BAG72136.1"/>
    <property type="molecule type" value="mRNA"/>
</dbReference>
<dbReference type="EMBL" id="GU811861">
    <property type="protein sequence ID" value="ADE80956.1"/>
    <property type="molecule type" value="Genomic_DNA"/>
</dbReference>
<dbReference type="EMBL" id="GU811863">
    <property type="protein sequence ID" value="ADE80958.1"/>
    <property type="molecule type" value="Genomic_DNA"/>
</dbReference>
<dbReference type="EMBL" id="GU811864">
    <property type="protein sequence ID" value="ADE80959.1"/>
    <property type="molecule type" value="Genomic_DNA"/>
</dbReference>
<dbReference type="EMBL" id="GU811866">
    <property type="protein sequence ID" value="ADE80961.1"/>
    <property type="molecule type" value="Genomic_DNA"/>
</dbReference>
<dbReference type="EMBL" id="GU811867">
    <property type="protein sequence ID" value="ADE80962.1"/>
    <property type="molecule type" value="Genomic_DNA"/>
</dbReference>
<dbReference type="EMBL" id="KU365344">
    <property type="protein sequence ID" value="ANO81542.1"/>
    <property type="molecule type" value="Genomic_DNA"/>
</dbReference>
<dbReference type="SMR" id="P0DO08"/>
<dbReference type="GO" id="GO:0043531">
    <property type="term" value="F:ADP binding"/>
    <property type="evidence" value="ECO:0007669"/>
    <property type="project" value="InterPro"/>
</dbReference>
<dbReference type="GO" id="GO:0005524">
    <property type="term" value="F:ATP binding"/>
    <property type="evidence" value="ECO:0007669"/>
    <property type="project" value="UniProtKB-KW"/>
</dbReference>
<dbReference type="GO" id="GO:0006952">
    <property type="term" value="P:defense response"/>
    <property type="evidence" value="ECO:0007669"/>
    <property type="project" value="UniProtKB-KW"/>
</dbReference>
<dbReference type="GO" id="GO:0051707">
    <property type="term" value="P:response to other organism"/>
    <property type="evidence" value="ECO:0007669"/>
    <property type="project" value="UniProtKB-ARBA"/>
</dbReference>
<dbReference type="CDD" id="cd14798">
    <property type="entry name" value="RX-CC_like"/>
    <property type="match status" value="1"/>
</dbReference>
<dbReference type="FunFam" id="3.80.10.10:FF:000942">
    <property type="entry name" value="Disease resistance protein Pik-2"/>
    <property type="match status" value="1"/>
</dbReference>
<dbReference type="FunFam" id="3.80.10.10:FF:000943">
    <property type="entry name" value="Disease resistance protein Pik-2"/>
    <property type="match status" value="1"/>
</dbReference>
<dbReference type="FunFam" id="1.10.10.10:FF:000322">
    <property type="entry name" value="Probable disease resistance protein At1g63360"/>
    <property type="match status" value="1"/>
</dbReference>
<dbReference type="Gene3D" id="1.20.5.4130">
    <property type="match status" value="1"/>
</dbReference>
<dbReference type="Gene3D" id="1.10.8.430">
    <property type="entry name" value="Helical domain of apoptotic protease-activating factors"/>
    <property type="match status" value="1"/>
</dbReference>
<dbReference type="Gene3D" id="3.40.50.300">
    <property type="entry name" value="P-loop containing nucleotide triphosphate hydrolases"/>
    <property type="match status" value="1"/>
</dbReference>
<dbReference type="Gene3D" id="3.80.10.10">
    <property type="entry name" value="Ribonuclease Inhibitor"/>
    <property type="match status" value="2"/>
</dbReference>
<dbReference type="Gene3D" id="1.10.10.10">
    <property type="entry name" value="Winged helix-like DNA-binding domain superfamily/Winged helix DNA-binding domain"/>
    <property type="match status" value="1"/>
</dbReference>
<dbReference type="InterPro" id="IPR042197">
    <property type="entry name" value="Apaf_helical"/>
</dbReference>
<dbReference type="InterPro" id="IPR044974">
    <property type="entry name" value="Disease_R_plants"/>
</dbReference>
<dbReference type="InterPro" id="IPR032675">
    <property type="entry name" value="LRR_dom_sf"/>
</dbReference>
<dbReference type="InterPro" id="IPR055414">
    <property type="entry name" value="LRR_R13L4/SHOC2-like"/>
</dbReference>
<dbReference type="InterPro" id="IPR002182">
    <property type="entry name" value="NB-ARC"/>
</dbReference>
<dbReference type="InterPro" id="IPR027417">
    <property type="entry name" value="P-loop_NTPase"/>
</dbReference>
<dbReference type="InterPro" id="IPR038005">
    <property type="entry name" value="RX-like_CC"/>
</dbReference>
<dbReference type="InterPro" id="IPR041118">
    <property type="entry name" value="Rx_N"/>
</dbReference>
<dbReference type="InterPro" id="IPR036388">
    <property type="entry name" value="WH-like_DNA-bd_sf"/>
</dbReference>
<dbReference type="PANTHER" id="PTHR23155:SF1013">
    <property type="entry name" value="DISEASE RESISTANCE PROTEIN PIK6-NP"/>
    <property type="match status" value="1"/>
</dbReference>
<dbReference type="PANTHER" id="PTHR23155">
    <property type="entry name" value="DISEASE RESISTANCE PROTEIN RP"/>
    <property type="match status" value="1"/>
</dbReference>
<dbReference type="Pfam" id="PF23598">
    <property type="entry name" value="LRR_14"/>
    <property type="match status" value="2"/>
</dbReference>
<dbReference type="Pfam" id="PF00931">
    <property type="entry name" value="NB-ARC"/>
    <property type="match status" value="2"/>
</dbReference>
<dbReference type="Pfam" id="PF18052">
    <property type="entry name" value="Rx_N"/>
    <property type="match status" value="1"/>
</dbReference>
<dbReference type="Pfam" id="PF23559">
    <property type="entry name" value="WH_DRP"/>
    <property type="match status" value="1"/>
</dbReference>
<dbReference type="PRINTS" id="PR00364">
    <property type="entry name" value="DISEASERSIST"/>
</dbReference>
<dbReference type="SUPFAM" id="SSF52058">
    <property type="entry name" value="L domain-like"/>
    <property type="match status" value="1"/>
</dbReference>
<dbReference type="SUPFAM" id="SSF52540">
    <property type="entry name" value="P-loop containing nucleoside triphosphate hydrolases"/>
    <property type="match status" value="1"/>
</dbReference>
<gene>
    <name evidence="12" type="primary">PIKM2-TS</name>
    <name evidence="6 7 8 9 10" type="synonym">PI-KM2</name>
    <name evidence="11" type="synonym">PIKM2-LTH</name>
</gene>